<protein>
    <recommendedName>
        <fullName evidence="1">Probable chemoreceptor glutamine deamidase CheD 2</fullName>
        <ecNumber evidence="1">3.5.1.44</ecNumber>
    </recommendedName>
</protein>
<gene>
    <name evidence="1" type="primary">cheD2</name>
    <name type="ordered locus">LIC_20101</name>
</gene>
<evidence type="ECO:0000255" key="1">
    <source>
        <dbReference type="HAMAP-Rule" id="MF_01440"/>
    </source>
</evidence>
<evidence type="ECO:0000305" key="2"/>
<proteinExistence type="inferred from homology"/>
<accession>Q75FT0</accession>
<organism>
    <name type="scientific">Leptospira interrogans serogroup Icterohaemorrhagiae serovar copenhageni (strain Fiocruz L1-130)</name>
    <dbReference type="NCBI Taxonomy" id="267671"/>
    <lineage>
        <taxon>Bacteria</taxon>
        <taxon>Pseudomonadati</taxon>
        <taxon>Spirochaetota</taxon>
        <taxon>Spirochaetia</taxon>
        <taxon>Leptospirales</taxon>
        <taxon>Leptospiraceae</taxon>
        <taxon>Leptospira</taxon>
    </lineage>
</organism>
<dbReference type="EC" id="3.5.1.44" evidence="1"/>
<dbReference type="EMBL" id="AE016824">
    <property type="protein sequence ID" value="AAS72130.1"/>
    <property type="status" value="ALT_INIT"/>
    <property type="molecule type" value="Genomic_DNA"/>
</dbReference>
<dbReference type="RefSeq" id="WP_000956231.1">
    <property type="nucleotide sequence ID" value="NC_005824.1"/>
</dbReference>
<dbReference type="SMR" id="Q75FT0"/>
<dbReference type="KEGG" id="lic:LIC_20101"/>
<dbReference type="HOGENOM" id="CLU_087854_2_0_12"/>
<dbReference type="Proteomes" id="UP000007037">
    <property type="component" value="Chromosome II"/>
</dbReference>
<dbReference type="GO" id="GO:0050568">
    <property type="term" value="F:protein-glutamine glutaminase activity"/>
    <property type="evidence" value="ECO:0007669"/>
    <property type="project" value="UniProtKB-UniRule"/>
</dbReference>
<dbReference type="GO" id="GO:0006935">
    <property type="term" value="P:chemotaxis"/>
    <property type="evidence" value="ECO:0007669"/>
    <property type="project" value="UniProtKB-UniRule"/>
</dbReference>
<dbReference type="CDD" id="cd16352">
    <property type="entry name" value="CheD"/>
    <property type="match status" value="1"/>
</dbReference>
<dbReference type="Gene3D" id="3.30.1330.200">
    <property type="match status" value="1"/>
</dbReference>
<dbReference type="HAMAP" id="MF_01440">
    <property type="entry name" value="CheD"/>
    <property type="match status" value="1"/>
</dbReference>
<dbReference type="InterPro" id="IPR038592">
    <property type="entry name" value="CheD-like_sf"/>
</dbReference>
<dbReference type="InterPro" id="IPR005659">
    <property type="entry name" value="Chemorcpt_Glu_NH3ase_CheD"/>
</dbReference>
<dbReference type="InterPro" id="IPR011324">
    <property type="entry name" value="Cytotoxic_necrot_fac-like_cat"/>
</dbReference>
<dbReference type="PANTHER" id="PTHR35147">
    <property type="entry name" value="CHEMORECEPTOR GLUTAMINE DEAMIDASE CHED-RELATED"/>
    <property type="match status" value="1"/>
</dbReference>
<dbReference type="PANTHER" id="PTHR35147:SF1">
    <property type="entry name" value="CHEMORECEPTOR GLUTAMINE DEAMIDASE CHED-RELATED"/>
    <property type="match status" value="1"/>
</dbReference>
<dbReference type="Pfam" id="PF03975">
    <property type="entry name" value="CheD"/>
    <property type="match status" value="1"/>
</dbReference>
<dbReference type="SUPFAM" id="SSF64438">
    <property type="entry name" value="CNF1/YfiH-like putative cysteine hydrolases"/>
    <property type="match status" value="1"/>
</dbReference>
<comment type="function">
    <text evidence="1">Probably deamidates glutamine residues to glutamate on methyl-accepting chemotaxis receptors (MCPs), playing an important role in chemotaxis.</text>
</comment>
<comment type="catalytic activity">
    <reaction evidence="1">
        <text>L-glutaminyl-[protein] + H2O = L-glutamyl-[protein] + NH4(+)</text>
        <dbReference type="Rhea" id="RHEA:16441"/>
        <dbReference type="Rhea" id="RHEA-COMP:10207"/>
        <dbReference type="Rhea" id="RHEA-COMP:10208"/>
        <dbReference type="ChEBI" id="CHEBI:15377"/>
        <dbReference type="ChEBI" id="CHEBI:28938"/>
        <dbReference type="ChEBI" id="CHEBI:29973"/>
        <dbReference type="ChEBI" id="CHEBI:30011"/>
        <dbReference type="EC" id="3.5.1.44"/>
    </reaction>
</comment>
<comment type="similarity">
    <text evidence="1">Belongs to the CheD family.</text>
</comment>
<comment type="sequence caution" evidence="2">
    <conflict type="erroneous initiation">
        <sequence resource="EMBL-CDS" id="AAS72130"/>
    </conflict>
    <text>Extended N-terminus.</text>
</comment>
<keyword id="KW-0145">Chemotaxis</keyword>
<keyword id="KW-0378">Hydrolase</keyword>
<name>CHED2_LEPIC</name>
<sequence length="168" mass="18325">MLTKGSKVVNVGIADMQGAQSPEILRTTLGSCIGVVFYAPDKKIGAMAHFMLSKDPSGKDSQKNPFKYAETAIPLLIKKMNEMGCNPGEYSVRLFGGASMFKGVQSSFLQNIGEQNILTARAILEQSKIPLILEDVGGNDGRTISLYLDDGRVLLKKGGFEKYLYKVR</sequence>
<feature type="chain" id="PRO_0000251043" description="Probable chemoreceptor glutamine deamidase CheD 2">
    <location>
        <begin position="1"/>
        <end position="168"/>
    </location>
</feature>
<reference key="1">
    <citation type="journal article" date="2004" name="J. Bacteriol.">
        <title>Comparative genomics of two Leptospira interrogans serovars reveals novel insights into physiology and pathogenesis.</title>
        <authorList>
            <person name="Nascimento A.L.T.O."/>
            <person name="Ko A.I."/>
            <person name="Martins E.A.L."/>
            <person name="Monteiro-Vitorello C.B."/>
            <person name="Ho P.L."/>
            <person name="Haake D.A."/>
            <person name="Verjovski-Almeida S."/>
            <person name="Hartskeerl R.A."/>
            <person name="Marques M.V."/>
            <person name="Oliveira M.C."/>
            <person name="Menck C.F.M."/>
            <person name="Leite L.C.C."/>
            <person name="Carrer H."/>
            <person name="Coutinho L.L."/>
            <person name="Degrave W.M."/>
            <person name="Dellagostin O.A."/>
            <person name="El-Dorry H."/>
            <person name="Ferro E.S."/>
            <person name="Ferro M.I.T."/>
            <person name="Furlan L.R."/>
            <person name="Gamberini M."/>
            <person name="Giglioti E.A."/>
            <person name="Goes-Neto A."/>
            <person name="Goldman G.H."/>
            <person name="Goldman M.H.S."/>
            <person name="Harakava R."/>
            <person name="Jeronimo S.M.B."/>
            <person name="Junqueira-de-Azevedo I.L.M."/>
            <person name="Kimura E.T."/>
            <person name="Kuramae E.E."/>
            <person name="Lemos E.G.M."/>
            <person name="Lemos M.V.F."/>
            <person name="Marino C.L."/>
            <person name="Nunes L.R."/>
            <person name="de Oliveira R.C."/>
            <person name="Pereira G.G."/>
            <person name="Reis M.S."/>
            <person name="Schriefer A."/>
            <person name="Siqueira W.J."/>
            <person name="Sommer P."/>
            <person name="Tsai S.M."/>
            <person name="Simpson A.J.G."/>
            <person name="Ferro J.A."/>
            <person name="Camargo L.E.A."/>
            <person name="Kitajima J.P."/>
            <person name="Setubal J.C."/>
            <person name="Van Sluys M.A."/>
        </authorList>
    </citation>
    <scope>NUCLEOTIDE SEQUENCE [LARGE SCALE GENOMIC DNA]</scope>
    <source>
        <strain>Fiocruz L1-130</strain>
    </source>
</reference>